<keyword id="KW-0002">3D-structure</keyword>
<keyword id="KW-1003">Cell membrane</keyword>
<keyword id="KW-0297">G-protein coupled receptor</keyword>
<keyword id="KW-0325">Glycoprotein</keyword>
<keyword id="KW-0449">Lipoprotein</keyword>
<keyword id="KW-0472">Membrane</keyword>
<keyword id="KW-0564">Palmitate</keyword>
<keyword id="KW-0675">Receptor</keyword>
<keyword id="KW-1185">Reference proteome</keyword>
<keyword id="KW-0807">Transducer</keyword>
<keyword id="KW-0812">Transmembrane</keyword>
<keyword id="KW-1133">Transmembrane helix</keyword>
<evidence type="ECO:0000250" key="1"/>
<evidence type="ECO:0000250" key="2">
    <source>
        <dbReference type="UniProtKB" id="P30518"/>
    </source>
</evidence>
<evidence type="ECO:0000255" key="3"/>
<evidence type="ECO:0000255" key="4">
    <source>
        <dbReference type="PROSITE-ProRule" id="PRU00521"/>
    </source>
</evidence>
<evidence type="ECO:0000256" key="5">
    <source>
        <dbReference type="SAM" id="MobiDB-lite"/>
    </source>
</evidence>
<evidence type="ECO:0000269" key="6">
    <source>
    </source>
</evidence>
<evidence type="ECO:0000305" key="7"/>
<evidence type="ECO:0007829" key="8">
    <source>
        <dbReference type="PDB" id="2JX4"/>
    </source>
</evidence>
<accession>Q00788</accession>
<accession>Q53ZC4</accession>
<proteinExistence type="evidence at protein level"/>
<dbReference type="EMBL" id="Z11932">
    <property type="protein sequence ID" value="CAA77989.1"/>
    <property type="molecule type" value="mRNA"/>
</dbReference>
<dbReference type="EMBL" id="Z22758">
    <property type="protein sequence ID" value="CAA80439.1"/>
    <property type="molecule type" value="Genomic_DNA"/>
</dbReference>
<dbReference type="EMBL" id="AY338195">
    <property type="protein sequence ID" value="AAQ01565.1"/>
    <property type="molecule type" value="mRNA"/>
</dbReference>
<dbReference type="PIR" id="S44045">
    <property type="entry name" value="S44045"/>
</dbReference>
<dbReference type="RefSeq" id="NP_062009.1">
    <property type="nucleotide sequence ID" value="NM_019136.2"/>
</dbReference>
<dbReference type="RefSeq" id="XP_006229611.1">
    <property type="nucleotide sequence ID" value="XM_006229549.3"/>
</dbReference>
<dbReference type="PDB" id="2JX4">
    <property type="method" value="NMR"/>
    <property type="chains" value="A=226-271"/>
</dbReference>
<dbReference type="PDBsum" id="2JX4"/>
<dbReference type="SMR" id="Q00788"/>
<dbReference type="FunCoup" id="Q00788">
    <property type="interactions" value="80"/>
</dbReference>
<dbReference type="STRING" id="10116.ENSRNOP00000071931"/>
<dbReference type="BindingDB" id="Q00788"/>
<dbReference type="ChEMBL" id="CHEMBL3766"/>
<dbReference type="DrugCentral" id="Q00788"/>
<dbReference type="GuidetoPHARMACOLOGY" id="368"/>
<dbReference type="GlyCosmos" id="Q00788">
    <property type="glycosylation" value="2 sites, No reported glycans"/>
</dbReference>
<dbReference type="GlyGen" id="Q00788">
    <property type="glycosylation" value="2 sites"/>
</dbReference>
<dbReference type="PhosphoSitePlus" id="Q00788"/>
<dbReference type="PaxDb" id="10116-ENSRNOP00000053179"/>
<dbReference type="Ensembl" id="ENSRNOT00000091495.2">
    <property type="protein sequence ID" value="ENSRNOP00000071931.1"/>
    <property type="gene ID" value="ENSRNOG00000059862.2"/>
</dbReference>
<dbReference type="GeneID" id="25108"/>
<dbReference type="KEGG" id="rno:25108"/>
<dbReference type="AGR" id="RGD:2186"/>
<dbReference type="CTD" id="554"/>
<dbReference type="RGD" id="2186">
    <property type="gene designation" value="Avpr2"/>
</dbReference>
<dbReference type="eggNOG" id="KOG3656">
    <property type="taxonomic scope" value="Eukaryota"/>
</dbReference>
<dbReference type="GeneTree" id="ENSGT01050000244882"/>
<dbReference type="InParanoid" id="Q00788"/>
<dbReference type="OMA" id="FIATCQG"/>
<dbReference type="OrthoDB" id="5987909at2759"/>
<dbReference type="PhylomeDB" id="Q00788"/>
<dbReference type="TreeFam" id="TF106499"/>
<dbReference type="Reactome" id="R-RNO-388479">
    <property type="pathway name" value="Vasopressin-like receptors"/>
</dbReference>
<dbReference type="Reactome" id="R-RNO-432040">
    <property type="pathway name" value="Vasopressin regulates renal water homeostasis via Aquaporins"/>
</dbReference>
<dbReference type="Reactome" id="R-RNO-8856825">
    <property type="pathway name" value="Cargo recognition for clathrin-mediated endocytosis"/>
</dbReference>
<dbReference type="Reactome" id="R-RNO-8856828">
    <property type="pathway name" value="Clathrin-mediated endocytosis"/>
</dbReference>
<dbReference type="EvolutionaryTrace" id="Q00788"/>
<dbReference type="PRO" id="PR:Q00788"/>
<dbReference type="Proteomes" id="UP000002494">
    <property type="component" value="Chromosome X"/>
</dbReference>
<dbReference type="Bgee" id="ENSRNOG00000059862">
    <property type="expression patterns" value="Expressed in kidney and 8 other cell types or tissues"/>
</dbReference>
<dbReference type="ExpressionAtlas" id="Q00788">
    <property type="expression patterns" value="baseline and differential"/>
</dbReference>
<dbReference type="GO" id="GO:0030139">
    <property type="term" value="C:endocytic vesicle"/>
    <property type="evidence" value="ECO:0000266"/>
    <property type="project" value="RGD"/>
</dbReference>
<dbReference type="GO" id="GO:0005768">
    <property type="term" value="C:endosome"/>
    <property type="evidence" value="ECO:0000266"/>
    <property type="project" value="RGD"/>
</dbReference>
<dbReference type="GO" id="GO:0048471">
    <property type="term" value="C:perinuclear region of cytoplasm"/>
    <property type="evidence" value="ECO:0000266"/>
    <property type="project" value="RGD"/>
</dbReference>
<dbReference type="GO" id="GO:0005886">
    <property type="term" value="C:plasma membrane"/>
    <property type="evidence" value="ECO:0000266"/>
    <property type="project" value="RGD"/>
</dbReference>
<dbReference type="GO" id="GO:0017046">
    <property type="term" value="F:peptide hormone binding"/>
    <property type="evidence" value="ECO:0000304"/>
    <property type="project" value="RGD"/>
</dbReference>
<dbReference type="GO" id="GO:0038023">
    <property type="term" value="F:signaling receptor activity"/>
    <property type="evidence" value="ECO:0000266"/>
    <property type="project" value="RGD"/>
</dbReference>
<dbReference type="GO" id="GO:0005000">
    <property type="term" value="F:vasopressin receptor activity"/>
    <property type="evidence" value="ECO:0000266"/>
    <property type="project" value="RGD"/>
</dbReference>
<dbReference type="GO" id="GO:0032870">
    <property type="term" value="P:cellular response to hormone stimulus"/>
    <property type="evidence" value="ECO:0000318"/>
    <property type="project" value="GO_Central"/>
</dbReference>
<dbReference type="GO" id="GO:0007186">
    <property type="term" value="P:G protein-coupled receptor signaling pathway"/>
    <property type="evidence" value="ECO:0000318"/>
    <property type="project" value="GO_Central"/>
</dbReference>
<dbReference type="GO" id="GO:0008285">
    <property type="term" value="P:negative regulation of cell population proliferation"/>
    <property type="evidence" value="ECO:0000266"/>
    <property type="project" value="RGD"/>
</dbReference>
<dbReference type="GO" id="GO:0035811">
    <property type="term" value="P:negative regulation of urine volume"/>
    <property type="evidence" value="ECO:0000315"/>
    <property type="project" value="RGD"/>
</dbReference>
<dbReference type="GO" id="GO:0045777">
    <property type="term" value="P:positive regulation of blood pressure"/>
    <property type="evidence" value="ECO:0000314"/>
    <property type="project" value="RGD"/>
</dbReference>
<dbReference type="GO" id="GO:0008284">
    <property type="term" value="P:positive regulation of cell population proliferation"/>
    <property type="evidence" value="ECO:0000315"/>
    <property type="project" value="RGD"/>
</dbReference>
<dbReference type="GO" id="GO:0010628">
    <property type="term" value="P:positive regulation of gene expression"/>
    <property type="evidence" value="ECO:0000315"/>
    <property type="project" value="UniProtKB"/>
</dbReference>
<dbReference type="GO" id="GO:1902533">
    <property type="term" value="P:positive regulation of intracellular signal transduction"/>
    <property type="evidence" value="ECO:0000266"/>
    <property type="project" value="RGD"/>
</dbReference>
<dbReference type="GO" id="GO:0003084">
    <property type="term" value="P:positive regulation of systemic arterial blood pressure"/>
    <property type="evidence" value="ECO:0000315"/>
    <property type="project" value="RGD"/>
</dbReference>
<dbReference type="GO" id="GO:0045907">
    <property type="term" value="P:positive regulation of vasoconstriction"/>
    <property type="evidence" value="ECO:0000318"/>
    <property type="project" value="GO_Central"/>
</dbReference>
<dbReference type="GO" id="GO:0001992">
    <property type="term" value="P:regulation of systemic arterial blood pressure by vasopressin"/>
    <property type="evidence" value="ECO:0000318"/>
    <property type="project" value="GO_Central"/>
</dbReference>
<dbReference type="GO" id="GO:0034097">
    <property type="term" value="P:response to cytokine"/>
    <property type="evidence" value="ECO:0000266"/>
    <property type="project" value="RGD"/>
</dbReference>
<dbReference type="GO" id="GO:0021537">
    <property type="term" value="P:telencephalon development"/>
    <property type="evidence" value="ECO:0000270"/>
    <property type="project" value="RGD"/>
</dbReference>
<dbReference type="CDD" id="cd15388">
    <property type="entry name" value="7tmA_V2R"/>
    <property type="match status" value="1"/>
</dbReference>
<dbReference type="FunFam" id="1.20.1070.10:FF:000190">
    <property type="entry name" value="Vasopressin V2 receptor"/>
    <property type="match status" value="1"/>
</dbReference>
<dbReference type="Gene3D" id="1.20.1070.10">
    <property type="entry name" value="Rhodopsin 7-helix transmembrane proteins"/>
    <property type="match status" value="1"/>
</dbReference>
<dbReference type="InterPro" id="IPR000276">
    <property type="entry name" value="GPCR_Rhodpsn"/>
</dbReference>
<dbReference type="InterPro" id="IPR017452">
    <property type="entry name" value="GPCR_Rhodpsn_7TM"/>
</dbReference>
<dbReference type="InterPro" id="IPR001817">
    <property type="entry name" value="Vasoprsn_rcpt"/>
</dbReference>
<dbReference type="InterPro" id="IPR000161">
    <property type="entry name" value="Vprsn_rcpt_V2"/>
</dbReference>
<dbReference type="PANTHER" id="PTHR24241">
    <property type="entry name" value="NEUROPEPTIDE RECEPTOR-RELATED G-PROTEIN COUPLED RECEPTOR"/>
    <property type="match status" value="1"/>
</dbReference>
<dbReference type="PANTHER" id="PTHR24241:SF20">
    <property type="entry name" value="VASOPRESSIN V2 RECEPTOR"/>
    <property type="match status" value="1"/>
</dbReference>
<dbReference type="Pfam" id="PF00001">
    <property type="entry name" value="7tm_1"/>
    <property type="match status" value="1"/>
</dbReference>
<dbReference type="PRINTS" id="PR00237">
    <property type="entry name" value="GPCRRHODOPSN"/>
</dbReference>
<dbReference type="PRINTS" id="PR00896">
    <property type="entry name" value="VASOPRESSINR"/>
</dbReference>
<dbReference type="PRINTS" id="PR00898">
    <property type="entry name" value="VASOPRSNV2R"/>
</dbReference>
<dbReference type="SUPFAM" id="SSF81321">
    <property type="entry name" value="Family A G protein-coupled receptor-like"/>
    <property type="match status" value="1"/>
</dbReference>
<dbReference type="PROSITE" id="PS00237">
    <property type="entry name" value="G_PROTEIN_RECEP_F1_1"/>
    <property type="match status" value="1"/>
</dbReference>
<dbReference type="PROSITE" id="PS50262">
    <property type="entry name" value="G_PROTEIN_RECEP_F1_2"/>
    <property type="match status" value="1"/>
</dbReference>
<sequence length="371" mass="40749">MLLVSTVSAVPGLFSPPSSPSNSSQEELLDDRDPLLVRAELALLSTIFVAVALSNGLVLGALIRRGRRGRWAPMHVFISHLCLADLAVALFQVLPQLAWDATDRFHGPDALCRAVKYLQMVGMYASSYMILAMTLDRHRAICRPMLAYRHGGGARWNRPVLVAWAFSLLLSLPQLFIFAQRDVGNGSGVFDCWARFAEPWGLRAYVTWIALMVFVAPALGIAACQVLIFREIHASLVPGPSERAGRRRRGRRTGSPSEGAHVSAAMAKTVRMTLVIVIVYVLCWAPFFLVQLWAAWDPEAPLERPPFVLLMLLASLNSCTNPWIYASFSSSVSSELRSLLCCAQRHTTHSLGPQDESCATASSSLMKDTPS</sequence>
<organism>
    <name type="scientific">Rattus norvegicus</name>
    <name type="common">Rat</name>
    <dbReference type="NCBI Taxonomy" id="10116"/>
    <lineage>
        <taxon>Eukaryota</taxon>
        <taxon>Metazoa</taxon>
        <taxon>Chordata</taxon>
        <taxon>Craniata</taxon>
        <taxon>Vertebrata</taxon>
        <taxon>Euteleostomi</taxon>
        <taxon>Mammalia</taxon>
        <taxon>Eutheria</taxon>
        <taxon>Euarchontoglires</taxon>
        <taxon>Glires</taxon>
        <taxon>Rodentia</taxon>
        <taxon>Myomorpha</taxon>
        <taxon>Muroidea</taxon>
        <taxon>Muridae</taxon>
        <taxon>Murinae</taxon>
        <taxon>Rattus</taxon>
    </lineage>
</organism>
<reference key="1">
    <citation type="journal article" date="1992" name="Nature">
        <title>Cloning and characterization of a vasopressin V2 receptor and possible link to nephrogenic diabetes insipidus.</title>
        <authorList>
            <person name="Lolait S.J."/>
            <person name="O'Carroll A.-M."/>
            <person name="McBride O.W."/>
            <person name="Konig M."/>
            <person name="Morel A."/>
            <person name="Brownstein M.J."/>
        </authorList>
    </citation>
    <scope>NUCLEOTIDE SEQUENCE [MRNA]</scope>
    <scope>FUNCTION</scope>
    <scope>SUBCELLULAR LOCATION</scope>
    <source>
        <strain>Wistar Kyoto</strain>
        <tissue>Kidney</tissue>
    </source>
</reference>
<reference key="2">
    <citation type="journal article" date="1994" name="Pflugers Arch.">
        <title>Molecular analysis of vasopressin receptors in the rat nephron. Evidence for alternative splicing of the V2 receptor.</title>
        <authorList>
            <person name="Firsov D."/>
            <person name="Mandon B."/>
            <person name="Morel A."/>
            <person name="Merot J."/>
            <person name="le Maout S."/>
            <person name="Bellanger A.C."/>
            <person name="de Rouffignac C."/>
            <person name="Elalouf J.-M."/>
            <person name="Buhler J.M."/>
        </authorList>
    </citation>
    <scope>NUCLEOTIDE SEQUENCE [GENOMIC DNA]</scope>
    <scope>SEQUENCE REVISION TO 246-254</scope>
    <source>
        <strain>Sprague-Dawley</strain>
        <tissue>Kidney</tissue>
    </source>
</reference>
<reference key="3">
    <citation type="submission" date="2003-07" db="EMBL/GenBank/DDBJ databases">
        <title>Rat vasopressin 2 receptor gene DNA sequence.</title>
        <authorList>
            <person name="Terry R."/>
            <person name="Mullins D."/>
        </authorList>
    </citation>
    <scope>NUCLEOTIDE SEQUENCE [MRNA]</scope>
    <source>
        <strain>Sprague-Dawley</strain>
    </source>
</reference>
<comment type="function">
    <text evidence="2 6">Receptor for arginine vasopressin. The activity of this receptor is mediated by G proteins which activate adenylate cyclase (PubMed:1534150). Involved in renal water reabsorption (By similarity).</text>
</comment>
<comment type="subunit">
    <text evidence="2">Interacts with ARRDC4 (By similarity). Identified in a complex containing at least ARRDC4, V2R and HGS (By similarity). Interacts with TMEM147 (By similarity).</text>
</comment>
<comment type="subcellular location">
    <subcellularLocation>
        <location evidence="6">Cell membrane</location>
        <topology evidence="2">Multi-pass membrane protein</topology>
    </subcellularLocation>
</comment>
<comment type="tissue specificity">
    <text>Kidney.</text>
</comment>
<comment type="similarity">
    <text evidence="4">Belongs to the G-protein coupled receptor 1 family. Vasopressin/oxytocin receptor subfamily.</text>
</comment>
<feature type="chain" id="PRO_0000070211" description="Vasopressin V2 receptor">
    <location>
        <begin position="1"/>
        <end position="371"/>
    </location>
</feature>
<feature type="topological domain" description="Extracellular" evidence="3">
    <location>
        <begin position="1"/>
        <end position="38"/>
    </location>
</feature>
<feature type="transmembrane region" description="Helical; Name=1" evidence="3">
    <location>
        <begin position="39"/>
        <end position="63"/>
    </location>
</feature>
<feature type="topological domain" description="Cytoplasmic" evidence="3">
    <location>
        <begin position="64"/>
        <end position="77"/>
    </location>
</feature>
<feature type="transmembrane region" description="Helical; Name=2" evidence="3">
    <location>
        <begin position="78"/>
        <end position="98"/>
    </location>
</feature>
<feature type="topological domain" description="Extracellular" evidence="3">
    <location>
        <begin position="99"/>
        <end position="113"/>
    </location>
</feature>
<feature type="transmembrane region" description="Helical; Name=3" evidence="3">
    <location>
        <begin position="114"/>
        <end position="135"/>
    </location>
</feature>
<feature type="topological domain" description="Cytoplasmic" evidence="3">
    <location>
        <begin position="136"/>
        <end position="159"/>
    </location>
</feature>
<feature type="transmembrane region" description="Helical; Name=4" evidence="3">
    <location>
        <begin position="160"/>
        <end position="180"/>
    </location>
</feature>
<feature type="topological domain" description="Extracellular" evidence="3">
    <location>
        <begin position="181"/>
        <end position="200"/>
    </location>
</feature>
<feature type="transmembrane region" description="Helical; Name=5" evidence="3">
    <location>
        <begin position="201"/>
        <end position="220"/>
    </location>
</feature>
<feature type="topological domain" description="Cytoplasmic" evidence="3">
    <location>
        <begin position="221"/>
        <end position="271"/>
    </location>
</feature>
<feature type="transmembrane region" description="Helical; Name=6" evidence="3">
    <location>
        <begin position="272"/>
        <end position="293"/>
    </location>
</feature>
<feature type="topological domain" description="Extracellular" evidence="3">
    <location>
        <begin position="294"/>
        <end position="308"/>
    </location>
</feature>
<feature type="transmembrane region" description="Helical; Name=7" evidence="3">
    <location>
        <begin position="309"/>
        <end position="328"/>
    </location>
</feature>
<feature type="topological domain" description="Cytoplasmic" evidence="3">
    <location>
        <begin position="329"/>
        <end position="371"/>
    </location>
</feature>
<feature type="region of interest" description="Disordered" evidence="5">
    <location>
        <begin position="240"/>
        <end position="260"/>
    </location>
</feature>
<feature type="region of interest" description="Disordered" evidence="5">
    <location>
        <begin position="349"/>
        <end position="371"/>
    </location>
</feature>
<feature type="compositionally biased region" description="Polar residues" evidence="5">
    <location>
        <begin position="357"/>
        <end position="371"/>
    </location>
</feature>
<feature type="lipid moiety-binding region" description="S-palmitoyl cysteine" evidence="1">
    <location>
        <position position="341"/>
    </location>
</feature>
<feature type="lipid moiety-binding region" description="S-palmitoyl cysteine" evidence="1">
    <location>
        <position position="342"/>
    </location>
</feature>
<feature type="glycosylation site" description="N-linked (GlcNAc...) asparagine" evidence="3">
    <location>
        <position position="22"/>
    </location>
</feature>
<feature type="glycosylation site" description="N-linked (GlcNAc...) asparagine" evidence="3">
    <location>
        <position position="185"/>
    </location>
</feature>
<feature type="sequence conflict" description="In Ref. 1; CAA77989." evidence="7" ref="1">
    <original>RRRRGRRTG</original>
    <variation>TPQRAPDR</variation>
    <location>
        <begin position="246"/>
        <end position="254"/>
    </location>
</feature>
<feature type="helix" evidence="8">
    <location>
        <begin position="226"/>
        <end position="236"/>
    </location>
</feature>
<feature type="helix" evidence="8">
    <location>
        <begin position="238"/>
        <end position="242"/>
    </location>
</feature>
<feature type="turn" evidence="8">
    <location>
        <begin position="243"/>
        <end position="247"/>
    </location>
</feature>
<feature type="turn" evidence="8">
    <location>
        <begin position="251"/>
        <end position="253"/>
    </location>
</feature>
<feature type="helix" evidence="8">
    <location>
        <begin position="254"/>
        <end position="273"/>
    </location>
</feature>
<name>V2R_RAT</name>
<gene>
    <name type="primary">Avpr2</name>
</gene>
<protein>
    <recommendedName>
        <fullName>Vasopressin V2 receptor</fullName>
        <shortName>V2R</shortName>
    </recommendedName>
    <alternativeName>
        <fullName>AVPR V2</fullName>
    </alternativeName>
    <alternativeName>
        <fullName>Antidiuretic hormone receptor</fullName>
    </alternativeName>
    <alternativeName>
        <fullName>Renal-type arginine vasopressin receptor</fullName>
    </alternativeName>
</protein>